<sequence length="313" mass="36850">MESIFFMIGFENQYQIGLVESSYDDNPDDYLTTNGLYFTNAKYISDYFNQGTTLFEIKLPIDDNEFKYIRTGDRWRANRLNLVKSYSLFDSETYNKFGLNITDNKYIMDFASSLGKIDFLDKTRSLKLLYTNKSLDEASINGHISVLNWWKHSGLKLKYTELSIDGASGRGHIDVLNWWLNLAIYSKIKFKYTQQAINSASKNGKTDSLEWWKRTRLPLIYTTEAIDAASMKRKINSLDWWLKSGLQIEYTVSSMDHASWNNHTDVLDWWLKSGLELKYSKNCNNWIDRFGRTDILDWWEKSGLKIKFKHEIY</sequence>
<organism>
    <name type="scientific">Acanthamoeba polyphaga mimivirus</name>
    <name type="common">APMV</name>
    <dbReference type="NCBI Taxonomy" id="212035"/>
    <lineage>
        <taxon>Viruses</taxon>
        <taxon>Varidnaviria</taxon>
        <taxon>Bamfordvirae</taxon>
        <taxon>Nucleocytoviricota</taxon>
        <taxon>Megaviricetes</taxon>
        <taxon>Imitervirales</taxon>
        <taxon>Mimiviridae</taxon>
        <taxon>Megamimivirinae</taxon>
        <taxon>Mimivirus</taxon>
        <taxon>Mimivirus bradfordmassiliense</taxon>
    </lineage>
</organism>
<organismHost>
    <name type="scientific">Acanthamoeba polyphaga</name>
    <name type="common">Amoeba</name>
    <dbReference type="NCBI Taxonomy" id="5757"/>
</organismHost>
<reference key="1">
    <citation type="journal article" date="2004" name="Science">
        <title>The 1.2-megabase genome sequence of Mimivirus.</title>
        <authorList>
            <person name="Raoult D."/>
            <person name="Audic S."/>
            <person name="Robert C."/>
            <person name="Abergel C."/>
            <person name="Renesto P."/>
            <person name="Ogata H."/>
            <person name="La Scola B."/>
            <person name="Susan M."/>
            <person name="Claverie J.-M."/>
        </authorList>
    </citation>
    <scope>NUCLEOTIDE SEQUENCE [LARGE SCALE GENOMIC DNA]</scope>
    <source>
        <strain>Rowbotham-Bradford</strain>
    </source>
</reference>
<keyword id="KW-1185">Reference proteome</keyword>
<proteinExistence type="predicted"/>
<feature type="chain" id="PRO_0000071325" description="Uncharacterized protein L696">
    <location>
        <begin position="1"/>
        <end position="313"/>
    </location>
</feature>
<accession>Q5UNV9</accession>
<gene>
    <name type="ordered locus">MIMI_L696</name>
</gene>
<dbReference type="EMBL" id="AY653733">
    <property type="protein sequence ID" value="AAV50957.1"/>
    <property type="molecule type" value="Genomic_DNA"/>
</dbReference>
<dbReference type="SMR" id="Q5UNV9"/>
<dbReference type="KEGG" id="vg:9925348"/>
<dbReference type="OrthoDB" id="13313at10239"/>
<dbReference type="Proteomes" id="UP000001134">
    <property type="component" value="Genome"/>
</dbReference>
<dbReference type="InterPro" id="IPR052050">
    <property type="entry name" value="SecEffector_AnkRepeat"/>
</dbReference>
<dbReference type="PANTHER" id="PTHR46586">
    <property type="entry name" value="ANKYRIN REPEAT-CONTAINING PROTEIN"/>
    <property type="match status" value="1"/>
</dbReference>
<dbReference type="PANTHER" id="PTHR46586:SF3">
    <property type="entry name" value="ANKYRIN REPEAT-CONTAINING PROTEIN"/>
    <property type="match status" value="1"/>
</dbReference>
<dbReference type="SUPFAM" id="SSF140860">
    <property type="entry name" value="Pseudo ankyrin repeat-like"/>
    <property type="match status" value="1"/>
</dbReference>
<name>YL696_MIMIV</name>
<protein>
    <recommendedName>
        <fullName>Uncharacterized protein L696</fullName>
    </recommendedName>
</protein>